<dbReference type="EC" id="2.7.1.170" evidence="1"/>
<dbReference type="EMBL" id="CP000668">
    <property type="protein sequence ID" value="ABP39180.1"/>
    <property type="molecule type" value="Genomic_DNA"/>
</dbReference>
<dbReference type="RefSeq" id="WP_002218322.1">
    <property type="nucleotide sequence ID" value="NZ_CP009715.1"/>
</dbReference>
<dbReference type="SMR" id="A4TIR8"/>
<dbReference type="GeneID" id="57976303"/>
<dbReference type="KEGG" id="ypp:YPDSF_0774"/>
<dbReference type="PATRIC" id="fig|386656.14.peg.3089"/>
<dbReference type="UniPathway" id="UPA00343"/>
<dbReference type="UniPathway" id="UPA00544"/>
<dbReference type="GO" id="GO:0005524">
    <property type="term" value="F:ATP binding"/>
    <property type="evidence" value="ECO:0007669"/>
    <property type="project" value="UniProtKB-UniRule"/>
</dbReference>
<dbReference type="GO" id="GO:0016301">
    <property type="term" value="F:kinase activity"/>
    <property type="evidence" value="ECO:0007669"/>
    <property type="project" value="UniProtKB-KW"/>
</dbReference>
<dbReference type="GO" id="GO:0016773">
    <property type="term" value="F:phosphotransferase activity, alcohol group as acceptor"/>
    <property type="evidence" value="ECO:0007669"/>
    <property type="project" value="UniProtKB-UniRule"/>
</dbReference>
<dbReference type="GO" id="GO:0097175">
    <property type="term" value="P:1,6-anhydro-N-acetyl-beta-muramic acid catabolic process"/>
    <property type="evidence" value="ECO:0007669"/>
    <property type="project" value="UniProtKB-UniRule"/>
</dbReference>
<dbReference type="GO" id="GO:0006040">
    <property type="term" value="P:amino sugar metabolic process"/>
    <property type="evidence" value="ECO:0007669"/>
    <property type="project" value="InterPro"/>
</dbReference>
<dbReference type="GO" id="GO:0009254">
    <property type="term" value="P:peptidoglycan turnover"/>
    <property type="evidence" value="ECO:0007669"/>
    <property type="project" value="UniProtKB-UniRule"/>
</dbReference>
<dbReference type="CDD" id="cd24050">
    <property type="entry name" value="ASKHA_NBD_ANMK"/>
    <property type="match status" value="1"/>
</dbReference>
<dbReference type="Gene3D" id="3.30.420.40">
    <property type="match status" value="2"/>
</dbReference>
<dbReference type="HAMAP" id="MF_01270">
    <property type="entry name" value="AnhMurNAc_kinase"/>
    <property type="match status" value="1"/>
</dbReference>
<dbReference type="InterPro" id="IPR005338">
    <property type="entry name" value="Anhydro_N_Ac-Mur_kinase"/>
</dbReference>
<dbReference type="InterPro" id="IPR043129">
    <property type="entry name" value="ATPase_NBD"/>
</dbReference>
<dbReference type="NCBIfam" id="NF007138">
    <property type="entry name" value="PRK09585.1-1"/>
    <property type="match status" value="1"/>
</dbReference>
<dbReference type="NCBIfam" id="NF007139">
    <property type="entry name" value="PRK09585.1-3"/>
    <property type="match status" value="1"/>
</dbReference>
<dbReference type="NCBIfam" id="NF007148">
    <property type="entry name" value="PRK09585.3-2"/>
    <property type="match status" value="1"/>
</dbReference>
<dbReference type="PANTHER" id="PTHR30605">
    <property type="entry name" value="ANHYDRO-N-ACETYLMURAMIC ACID KINASE"/>
    <property type="match status" value="1"/>
</dbReference>
<dbReference type="PANTHER" id="PTHR30605:SF0">
    <property type="entry name" value="ANHYDRO-N-ACETYLMURAMIC ACID KINASE"/>
    <property type="match status" value="1"/>
</dbReference>
<dbReference type="Pfam" id="PF03702">
    <property type="entry name" value="AnmK"/>
    <property type="match status" value="1"/>
</dbReference>
<dbReference type="SUPFAM" id="SSF53067">
    <property type="entry name" value="Actin-like ATPase domain"/>
    <property type="match status" value="1"/>
</dbReference>
<name>ANMK_YERPP</name>
<organism>
    <name type="scientific">Yersinia pestis (strain Pestoides F)</name>
    <dbReference type="NCBI Taxonomy" id="386656"/>
    <lineage>
        <taxon>Bacteria</taxon>
        <taxon>Pseudomonadati</taxon>
        <taxon>Pseudomonadota</taxon>
        <taxon>Gammaproteobacteria</taxon>
        <taxon>Enterobacterales</taxon>
        <taxon>Yersiniaceae</taxon>
        <taxon>Yersinia</taxon>
    </lineage>
</organism>
<feature type="chain" id="PRO_1000067377" description="Anhydro-N-acetylmuramic acid kinase">
    <location>
        <begin position="1"/>
        <end position="370"/>
    </location>
</feature>
<feature type="binding site" evidence="1">
    <location>
        <begin position="12"/>
        <end position="19"/>
    </location>
    <ligand>
        <name>ATP</name>
        <dbReference type="ChEBI" id="CHEBI:30616"/>
    </ligand>
</feature>
<accession>A4TIR8</accession>
<gene>
    <name evidence="1" type="primary">anmK</name>
    <name type="ordered locus">YPDSF_0774</name>
</gene>
<comment type="function">
    <text evidence="1">Catalyzes the specific phosphorylation of 1,6-anhydro-N-acetylmuramic acid (anhMurNAc) with the simultaneous cleavage of the 1,6-anhydro ring, generating MurNAc-6-P. Is required for the utilization of anhMurNAc either imported from the medium or derived from its own cell wall murein, and thus plays a role in cell wall recycling.</text>
</comment>
<comment type="catalytic activity">
    <reaction evidence="1">
        <text>1,6-anhydro-N-acetyl-beta-muramate + ATP + H2O = N-acetyl-D-muramate 6-phosphate + ADP + H(+)</text>
        <dbReference type="Rhea" id="RHEA:24952"/>
        <dbReference type="ChEBI" id="CHEBI:15377"/>
        <dbReference type="ChEBI" id="CHEBI:15378"/>
        <dbReference type="ChEBI" id="CHEBI:30616"/>
        <dbReference type="ChEBI" id="CHEBI:58690"/>
        <dbReference type="ChEBI" id="CHEBI:58722"/>
        <dbReference type="ChEBI" id="CHEBI:456216"/>
        <dbReference type="EC" id="2.7.1.170"/>
    </reaction>
</comment>
<comment type="pathway">
    <text evidence="1">Amino-sugar metabolism; 1,6-anhydro-N-acetylmuramate degradation.</text>
</comment>
<comment type="pathway">
    <text evidence="1">Cell wall biogenesis; peptidoglycan recycling.</text>
</comment>
<comment type="similarity">
    <text evidence="1">Belongs to the anhydro-N-acetylmuramic acid kinase family.</text>
</comment>
<evidence type="ECO:0000255" key="1">
    <source>
        <dbReference type="HAMAP-Rule" id="MF_01270"/>
    </source>
</evidence>
<proteinExistence type="inferred from homology"/>
<sequence length="370" mass="39492">MKSGRFIGVMSGTSLDGVDVVLAAIDERMVAQQASYTHPIPLQLKKDILGMCQGQSTTLSAVGKLDAQLGILFAEAVLALLAKEGLSAQDITAIGCHGQTVWHEPLGEPAFTMQLGDNNRIAAMTQIATVGDFRRRDMAYGGQGAPLVPAFHHALLAHATEKRMVLNIGGIANLSVLLPDSPIRGFDTGPGNMLMDAWIWRNCSLPYDKDACWALSGHVNQPLLEQMFNDPYFRLPAPKSTGREYFNAAWLDKQLARIPGVTAEDIQATLAELTAVSITEQVRLAGGCDRLLVCGGGARNPLVMARISALLSGTEVCTTDDAGIRGDDMEALAFAWLAFRTLSGKPGNLPSVTGASRETILGAVHPVSSW</sequence>
<protein>
    <recommendedName>
        <fullName evidence="1">Anhydro-N-acetylmuramic acid kinase</fullName>
        <ecNumber evidence="1">2.7.1.170</ecNumber>
    </recommendedName>
    <alternativeName>
        <fullName evidence="1">AnhMurNAc kinase</fullName>
    </alternativeName>
</protein>
<reference key="1">
    <citation type="submission" date="2007-02" db="EMBL/GenBank/DDBJ databases">
        <title>Complete sequence of chromosome of Yersinia pestis Pestoides F.</title>
        <authorList>
            <consortium name="US DOE Joint Genome Institute"/>
            <person name="Copeland A."/>
            <person name="Lucas S."/>
            <person name="Lapidus A."/>
            <person name="Barry K."/>
            <person name="Detter J.C."/>
            <person name="Glavina del Rio T."/>
            <person name="Hammon N."/>
            <person name="Israni S."/>
            <person name="Dalin E."/>
            <person name="Tice H."/>
            <person name="Pitluck S."/>
            <person name="Di Bartolo G."/>
            <person name="Chain P."/>
            <person name="Malfatti S."/>
            <person name="Shin M."/>
            <person name="Vergez L."/>
            <person name="Schmutz J."/>
            <person name="Larimer F."/>
            <person name="Land M."/>
            <person name="Hauser L."/>
            <person name="Worsham P."/>
            <person name="Chu M."/>
            <person name="Bearden S."/>
            <person name="Garcia E."/>
            <person name="Richardson P."/>
        </authorList>
    </citation>
    <scope>NUCLEOTIDE SEQUENCE [LARGE SCALE GENOMIC DNA]</scope>
    <source>
        <strain>Pestoides F</strain>
    </source>
</reference>
<keyword id="KW-0067">ATP-binding</keyword>
<keyword id="KW-0119">Carbohydrate metabolism</keyword>
<keyword id="KW-0418">Kinase</keyword>
<keyword id="KW-0547">Nucleotide-binding</keyword>
<keyword id="KW-0808">Transferase</keyword>